<sequence length="282" mass="30957">MGQIINGKEVALKIKEEIKTFVEERKNNKLRIPKIASILVGNDGGSIYYMSSQEKVANSLGVDFLKIILEENVTDDDVINEIHKLNDDVNVQGIMLQLPLPKHLNEKKIIKEISVKKDIDCLTFESQGKLYMGEKGFLPCTPNSVVTLIKSLNVDITGKEVVVLGRSNIVGKPVAQLLLNENATVTICHSKTKNLKEVCSKADILVVAIGKPKFIDEEYIKENAIVIDVGTSSFEGKITGDVNFDKVIDKASFLTPVPGGVGALTTTLLIKNSCEALKEYED</sequence>
<protein>
    <recommendedName>
        <fullName evidence="1">Bifunctional protein FolD</fullName>
    </recommendedName>
    <domain>
        <recommendedName>
            <fullName evidence="1">Methylenetetrahydrofolate dehydrogenase</fullName>
            <ecNumber evidence="1">1.5.1.5</ecNumber>
        </recommendedName>
    </domain>
    <domain>
        <recommendedName>
            <fullName evidence="1">Methenyltetrahydrofolate cyclohydrolase</fullName>
            <ecNumber evidence="1">3.5.4.9</ecNumber>
        </recommendedName>
    </domain>
</protein>
<dbReference type="EC" id="1.5.1.5" evidence="1"/>
<dbReference type="EC" id="3.5.4.9" evidence="1"/>
<dbReference type="EMBL" id="CP001078">
    <property type="protein sequence ID" value="ACD51375.1"/>
    <property type="molecule type" value="Genomic_DNA"/>
</dbReference>
<dbReference type="RefSeq" id="WP_012449750.1">
    <property type="nucleotide sequence ID" value="NC_010723.1"/>
</dbReference>
<dbReference type="SMR" id="B2V4R7"/>
<dbReference type="KEGG" id="cbt:CLH_2170"/>
<dbReference type="HOGENOM" id="CLU_034045_2_1_9"/>
<dbReference type="UniPathway" id="UPA00193"/>
<dbReference type="GO" id="GO:0005829">
    <property type="term" value="C:cytosol"/>
    <property type="evidence" value="ECO:0007669"/>
    <property type="project" value="TreeGrafter"/>
</dbReference>
<dbReference type="GO" id="GO:0004477">
    <property type="term" value="F:methenyltetrahydrofolate cyclohydrolase activity"/>
    <property type="evidence" value="ECO:0007669"/>
    <property type="project" value="UniProtKB-UniRule"/>
</dbReference>
<dbReference type="GO" id="GO:0004488">
    <property type="term" value="F:methylenetetrahydrofolate dehydrogenase (NADP+) activity"/>
    <property type="evidence" value="ECO:0007669"/>
    <property type="project" value="UniProtKB-UniRule"/>
</dbReference>
<dbReference type="GO" id="GO:0000105">
    <property type="term" value="P:L-histidine biosynthetic process"/>
    <property type="evidence" value="ECO:0007669"/>
    <property type="project" value="UniProtKB-KW"/>
</dbReference>
<dbReference type="GO" id="GO:0009086">
    <property type="term" value="P:methionine biosynthetic process"/>
    <property type="evidence" value="ECO:0007669"/>
    <property type="project" value="UniProtKB-KW"/>
</dbReference>
<dbReference type="GO" id="GO:0006164">
    <property type="term" value="P:purine nucleotide biosynthetic process"/>
    <property type="evidence" value="ECO:0007669"/>
    <property type="project" value="UniProtKB-KW"/>
</dbReference>
<dbReference type="GO" id="GO:0035999">
    <property type="term" value="P:tetrahydrofolate interconversion"/>
    <property type="evidence" value="ECO:0007669"/>
    <property type="project" value="UniProtKB-UniRule"/>
</dbReference>
<dbReference type="CDD" id="cd01080">
    <property type="entry name" value="NAD_bind_m-THF_DH_Cyclohyd"/>
    <property type="match status" value="1"/>
</dbReference>
<dbReference type="FunFam" id="3.40.50.720:FF:000094">
    <property type="entry name" value="Bifunctional protein FolD"/>
    <property type="match status" value="1"/>
</dbReference>
<dbReference type="FunFam" id="3.40.50.10860:FF:000005">
    <property type="entry name" value="C-1-tetrahydrofolate synthase, cytoplasmic, putative"/>
    <property type="match status" value="1"/>
</dbReference>
<dbReference type="Gene3D" id="3.40.50.10860">
    <property type="entry name" value="Leucine Dehydrogenase, chain A, domain 1"/>
    <property type="match status" value="1"/>
</dbReference>
<dbReference type="Gene3D" id="3.40.50.720">
    <property type="entry name" value="NAD(P)-binding Rossmann-like Domain"/>
    <property type="match status" value="1"/>
</dbReference>
<dbReference type="HAMAP" id="MF_01576">
    <property type="entry name" value="THF_DHG_CYH"/>
    <property type="match status" value="1"/>
</dbReference>
<dbReference type="InterPro" id="IPR046346">
    <property type="entry name" value="Aminoacid_DH-like_N_sf"/>
</dbReference>
<dbReference type="InterPro" id="IPR036291">
    <property type="entry name" value="NAD(P)-bd_dom_sf"/>
</dbReference>
<dbReference type="InterPro" id="IPR000672">
    <property type="entry name" value="THF_DH/CycHdrlase"/>
</dbReference>
<dbReference type="InterPro" id="IPR020630">
    <property type="entry name" value="THF_DH/CycHdrlase_cat_dom"/>
</dbReference>
<dbReference type="InterPro" id="IPR020631">
    <property type="entry name" value="THF_DH/CycHdrlase_NAD-bd_dom"/>
</dbReference>
<dbReference type="NCBIfam" id="NF010769">
    <property type="entry name" value="PRK14172.1"/>
    <property type="match status" value="1"/>
</dbReference>
<dbReference type="PANTHER" id="PTHR48099:SF5">
    <property type="entry name" value="C-1-TETRAHYDROFOLATE SYNTHASE, CYTOPLASMIC"/>
    <property type="match status" value="1"/>
</dbReference>
<dbReference type="PANTHER" id="PTHR48099">
    <property type="entry name" value="C-1-TETRAHYDROFOLATE SYNTHASE, CYTOPLASMIC-RELATED"/>
    <property type="match status" value="1"/>
</dbReference>
<dbReference type="Pfam" id="PF00763">
    <property type="entry name" value="THF_DHG_CYH"/>
    <property type="match status" value="1"/>
</dbReference>
<dbReference type="Pfam" id="PF02882">
    <property type="entry name" value="THF_DHG_CYH_C"/>
    <property type="match status" value="1"/>
</dbReference>
<dbReference type="PRINTS" id="PR00085">
    <property type="entry name" value="THFDHDRGNASE"/>
</dbReference>
<dbReference type="SUPFAM" id="SSF53223">
    <property type="entry name" value="Aminoacid dehydrogenase-like, N-terminal domain"/>
    <property type="match status" value="1"/>
</dbReference>
<dbReference type="SUPFAM" id="SSF51735">
    <property type="entry name" value="NAD(P)-binding Rossmann-fold domains"/>
    <property type="match status" value="1"/>
</dbReference>
<keyword id="KW-0028">Amino-acid biosynthesis</keyword>
<keyword id="KW-0368">Histidine biosynthesis</keyword>
<keyword id="KW-0378">Hydrolase</keyword>
<keyword id="KW-0486">Methionine biosynthesis</keyword>
<keyword id="KW-0511">Multifunctional enzyme</keyword>
<keyword id="KW-0521">NADP</keyword>
<keyword id="KW-0554">One-carbon metabolism</keyword>
<keyword id="KW-0560">Oxidoreductase</keyword>
<keyword id="KW-0658">Purine biosynthesis</keyword>
<organism>
    <name type="scientific">Clostridium botulinum (strain Alaska E43 / Type E3)</name>
    <dbReference type="NCBI Taxonomy" id="508767"/>
    <lineage>
        <taxon>Bacteria</taxon>
        <taxon>Bacillati</taxon>
        <taxon>Bacillota</taxon>
        <taxon>Clostridia</taxon>
        <taxon>Eubacteriales</taxon>
        <taxon>Clostridiaceae</taxon>
        <taxon>Clostridium</taxon>
    </lineage>
</organism>
<feature type="chain" id="PRO_1000196753" description="Bifunctional protein FolD">
    <location>
        <begin position="1"/>
        <end position="282"/>
    </location>
</feature>
<feature type="binding site" evidence="1">
    <location>
        <begin position="165"/>
        <end position="167"/>
    </location>
    <ligand>
        <name>NADP(+)</name>
        <dbReference type="ChEBI" id="CHEBI:58349"/>
    </ligand>
</feature>
<feature type="binding site" evidence="1">
    <location>
        <position position="190"/>
    </location>
    <ligand>
        <name>NADP(+)</name>
        <dbReference type="ChEBI" id="CHEBI:58349"/>
    </ligand>
</feature>
<feature type="binding site" evidence="1">
    <location>
        <position position="231"/>
    </location>
    <ligand>
        <name>NADP(+)</name>
        <dbReference type="ChEBI" id="CHEBI:58349"/>
    </ligand>
</feature>
<comment type="function">
    <text evidence="1">Catalyzes the oxidation of 5,10-methylenetetrahydrofolate to 5,10-methenyltetrahydrofolate and then the hydrolysis of 5,10-methenyltetrahydrofolate to 10-formyltetrahydrofolate.</text>
</comment>
<comment type="catalytic activity">
    <reaction evidence="1">
        <text>(6R)-5,10-methylene-5,6,7,8-tetrahydrofolate + NADP(+) = (6R)-5,10-methenyltetrahydrofolate + NADPH</text>
        <dbReference type="Rhea" id="RHEA:22812"/>
        <dbReference type="ChEBI" id="CHEBI:15636"/>
        <dbReference type="ChEBI" id="CHEBI:57455"/>
        <dbReference type="ChEBI" id="CHEBI:57783"/>
        <dbReference type="ChEBI" id="CHEBI:58349"/>
        <dbReference type="EC" id="1.5.1.5"/>
    </reaction>
</comment>
<comment type="catalytic activity">
    <reaction evidence="1">
        <text>(6R)-5,10-methenyltetrahydrofolate + H2O = (6R)-10-formyltetrahydrofolate + H(+)</text>
        <dbReference type="Rhea" id="RHEA:23700"/>
        <dbReference type="ChEBI" id="CHEBI:15377"/>
        <dbReference type="ChEBI" id="CHEBI:15378"/>
        <dbReference type="ChEBI" id="CHEBI:57455"/>
        <dbReference type="ChEBI" id="CHEBI:195366"/>
        <dbReference type="EC" id="3.5.4.9"/>
    </reaction>
</comment>
<comment type="pathway">
    <text evidence="1">One-carbon metabolism; tetrahydrofolate interconversion.</text>
</comment>
<comment type="subunit">
    <text evidence="1">Homodimer.</text>
</comment>
<comment type="similarity">
    <text evidence="1">Belongs to the tetrahydrofolate dehydrogenase/cyclohydrolase family.</text>
</comment>
<gene>
    <name evidence="1" type="primary">folD</name>
    <name type="ordered locus">CLH_2170</name>
</gene>
<name>FOLD_CLOBA</name>
<accession>B2V4R7</accession>
<proteinExistence type="inferred from homology"/>
<reference key="1">
    <citation type="submission" date="2008-05" db="EMBL/GenBank/DDBJ databases">
        <title>Complete genome sequence of Clostridium botulinum E3 str. Alaska E43.</title>
        <authorList>
            <person name="Brinkac L.M."/>
            <person name="Brown J.L."/>
            <person name="Bruce D."/>
            <person name="Detter C."/>
            <person name="Munk C."/>
            <person name="Smith L.A."/>
            <person name="Smith T.J."/>
            <person name="Sutton G."/>
            <person name="Brettin T.S."/>
        </authorList>
    </citation>
    <scope>NUCLEOTIDE SEQUENCE [LARGE SCALE GENOMIC DNA]</scope>
    <source>
        <strain>Alaska E43 / Type E3</strain>
    </source>
</reference>
<evidence type="ECO:0000255" key="1">
    <source>
        <dbReference type="HAMAP-Rule" id="MF_01576"/>
    </source>
</evidence>